<feature type="chain" id="PRO_1000199521" description="Threonine--tRNA ligase">
    <location>
        <begin position="1"/>
        <end position="640"/>
    </location>
</feature>
<feature type="domain" description="TGS" evidence="2">
    <location>
        <begin position="1"/>
        <end position="61"/>
    </location>
</feature>
<feature type="region of interest" description="Catalytic" evidence="1">
    <location>
        <begin position="242"/>
        <end position="533"/>
    </location>
</feature>
<feature type="binding site" evidence="1">
    <location>
        <position position="333"/>
    </location>
    <ligand>
        <name>Zn(2+)</name>
        <dbReference type="ChEBI" id="CHEBI:29105"/>
    </ligand>
</feature>
<feature type="binding site" evidence="1">
    <location>
        <position position="384"/>
    </location>
    <ligand>
        <name>Zn(2+)</name>
        <dbReference type="ChEBI" id="CHEBI:29105"/>
    </ligand>
</feature>
<feature type="binding site" evidence="1">
    <location>
        <position position="510"/>
    </location>
    <ligand>
        <name>Zn(2+)</name>
        <dbReference type="ChEBI" id="CHEBI:29105"/>
    </ligand>
</feature>
<proteinExistence type="inferred from homology"/>
<dbReference type="EC" id="6.1.1.3" evidence="1"/>
<dbReference type="EMBL" id="CP001172">
    <property type="protein sequence ID" value="ACJ56005.1"/>
    <property type="molecule type" value="Genomic_DNA"/>
</dbReference>
<dbReference type="RefSeq" id="WP_001121792.1">
    <property type="nucleotide sequence ID" value="NZ_CP001172.1"/>
</dbReference>
<dbReference type="SMR" id="B7H005"/>
<dbReference type="HOGENOM" id="CLU_008554_0_1_6"/>
<dbReference type="Proteomes" id="UP000006924">
    <property type="component" value="Chromosome"/>
</dbReference>
<dbReference type="GO" id="GO:0005829">
    <property type="term" value="C:cytosol"/>
    <property type="evidence" value="ECO:0007669"/>
    <property type="project" value="TreeGrafter"/>
</dbReference>
<dbReference type="GO" id="GO:0005524">
    <property type="term" value="F:ATP binding"/>
    <property type="evidence" value="ECO:0007669"/>
    <property type="project" value="UniProtKB-UniRule"/>
</dbReference>
<dbReference type="GO" id="GO:0046872">
    <property type="term" value="F:metal ion binding"/>
    <property type="evidence" value="ECO:0007669"/>
    <property type="project" value="UniProtKB-KW"/>
</dbReference>
<dbReference type="GO" id="GO:0004829">
    <property type="term" value="F:threonine-tRNA ligase activity"/>
    <property type="evidence" value="ECO:0007669"/>
    <property type="project" value="UniProtKB-UniRule"/>
</dbReference>
<dbReference type="GO" id="GO:0000049">
    <property type="term" value="F:tRNA binding"/>
    <property type="evidence" value="ECO:0007669"/>
    <property type="project" value="UniProtKB-KW"/>
</dbReference>
<dbReference type="GO" id="GO:0006435">
    <property type="term" value="P:threonyl-tRNA aminoacylation"/>
    <property type="evidence" value="ECO:0007669"/>
    <property type="project" value="UniProtKB-UniRule"/>
</dbReference>
<dbReference type="CDD" id="cd01667">
    <property type="entry name" value="TGS_ThrRS"/>
    <property type="match status" value="1"/>
</dbReference>
<dbReference type="CDD" id="cd00860">
    <property type="entry name" value="ThrRS_anticodon"/>
    <property type="match status" value="1"/>
</dbReference>
<dbReference type="CDD" id="cd00771">
    <property type="entry name" value="ThrRS_core"/>
    <property type="match status" value="1"/>
</dbReference>
<dbReference type="FunFam" id="3.10.20.30:FF:000005">
    <property type="entry name" value="Threonine--tRNA ligase"/>
    <property type="match status" value="1"/>
</dbReference>
<dbReference type="FunFam" id="3.30.54.20:FF:000002">
    <property type="entry name" value="Threonine--tRNA ligase"/>
    <property type="match status" value="1"/>
</dbReference>
<dbReference type="FunFam" id="3.30.930.10:FF:000002">
    <property type="entry name" value="Threonine--tRNA ligase"/>
    <property type="match status" value="1"/>
</dbReference>
<dbReference type="FunFam" id="3.40.50.800:FF:000001">
    <property type="entry name" value="Threonine--tRNA ligase"/>
    <property type="match status" value="1"/>
</dbReference>
<dbReference type="FunFam" id="3.30.980.10:FF:000005">
    <property type="entry name" value="Threonyl-tRNA synthetase, mitochondrial"/>
    <property type="match status" value="1"/>
</dbReference>
<dbReference type="Gene3D" id="3.10.20.30">
    <property type="match status" value="1"/>
</dbReference>
<dbReference type="Gene3D" id="3.30.54.20">
    <property type="match status" value="1"/>
</dbReference>
<dbReference type="Gene3D" id="3.40.50.800">
    <property type="entry name" value="Anticodon-binding domain"/>
    <property type="match status" value="1"/>
</dbReference>
<dbReference type="Gene3D" id="3.30.930.10">
    <property type="entry name" value="Bira Bifunctional Protein, Domain 2"/>
    <property type="match status" value="1"/>
</dbReference>
<dbReference type="Gene3D" id="3.30.980.10">
    <property type="entry name" value="Threonyl-trna Synthetase, Chain A, domain 2"/>
    <property type="match status" value="1"/>
</dbReference>
<dbReference type="HAMAP" id="MF_00184">
    <property type="entry name" value="Thr_tRNA_synth"/>
    <property type="match status" value="1"/>
</dbReference>
<dbReference type="InterPro" id="IPR002314">
    <property type="entry name" value="aa-tRNA-synt_IIb"/>
</dbReference>
<dbReference type="InterPro" id="IPR006195">
    <property type="entry name" value="aa-tRNA-synth_II"/>
</dbReference>
<dbReference type="InterPro" id="IPR045864">
    <property type="entry name" value="aa-tRNA-synth_II/BPL/LPL"/>
</dbReference>
<dbReference type="InterPro" id="IPR004154">
    <property type="entry name" value="Anticodon-bd"/>
</dbReference>
<dbReference type="InterPro" id="IPR036621">
    <property type="entry name" value="Anticodon-bd_dom_sf"/>
</dbReference>
<dbReference type="InterPro" id="IPR012675">
    <property type="entry name" value="Beta-grasp_dom_sf"/>
</dbReference>
<dbReference type="InterPro" id="IPR004095">
    <property type="entry name" value="TGS"/>
</dbReference>
<dbReference type="InterPro" id="IPR012676">
    <property type="entry name" value="TGS-like"/>
</dbReference>
<dbReference type="InterPro" id="IPR002320">
    <property type="entry name" value="Thr-tRNA-ligase_IIa"/>
</dbReference>
<dbReference type="InterPro" id="IPR018163">
    <property type="entry name" value="Thr/Ala-tRNA-synth_IIc_edit"/>
</dbReference>
<dbReference type="InterPro" id="IPR047246">
    <property type="entry name" value="ThrRS_anticodon"/>
</dbReference>
<dbReference type="InterPro" id="IPR033728">
    <property type="entry name" value="ThrRS_core"/>
</dbReference>
<dbReference type="InterPro" id="IPR012947">
    <property type="entry name" value="tRNA_SAD"/>
</dbReference>
<dbReference type="NCBIfam" id="TIGR00418">
    <property type="entry name" value="thrS"/>
    <property type="match status" value="1"/>
</dbReference>
<dbReference type="PANTHER" id="PTHR11451:SF44">
    <property type="entry name" value="THREONINE--TRNA LIGASE, CHLOROPLASTIC_MITOCHONDRIAL 2"/>
    <property type="match status" value="1"/>
</dbReference>
<dbReference type="PANTHER" id="PTHR11451">
    <property type="entry name" value="THREONINE-TRNA LIGASE"/>
    <property type="match status" value="1"/>
</dbReference>
<dbReference type="Pfam" id="PF03129">
    <property type="entry name" value="HGTP_anticodon"/>
    <property type="match status" value="1"/>
</dbReference>
<dbReference type="Pfam" id="PF02824">
    <property type="entry name" value="TGS"/>
    <property type="match status" value="1"/>
</dbReference>
<dbReference type="Pfam" id="PF00587">
    <property type="entry name" value="tRNA-synt_2b"/>
    <property type="match status" value="1"/>
</dbReference>
<dbReference type="Pfam" id="PF07973">
    <property type="entry name" value="tRNA_SAD"/>
    <property type="match status" value="1"/>
</dbReference>
<dbReference type="PRINTS" id="PR01047">
    <property type="entry name" value="TRNASYNTHTHR"/>
</dbReference>
<dbReference type="SMART" id="SM00863">
    <property type="entry name" value="tRNA_SAD"/>
    <property type="match status" value="1"/>
</dbReference>
<dbReference type="SUPFAM" id="SSF52954">
    <property type="entry name" value="Class II aaRS ABD-related"/>
    <property type="match status" value="1"/>
</dbReference>
<dbReference type="SUPFAM" id="SSF55681">
    <property type="entry name" value="Class II aaRS and biotin synthetases"/>
    <property type="match status" value="1"/>
</dbReference>
<dbReference type="SUPFAM" id="SSF81271">
    <property type="entry name" value="TGS-like"/>
    <property type="match status" value="1"/>
</dbReference>
<dbReference type="SUPFAM" id="SSF55186">
    <property type="entry name" value="ThrRS/AlaRS common domain"/>
    <property type="match status" value="1"/>
</dbReference>
<dbReference type="PROSITE" id="PS50862">
    <property type="entry name" value="AA_TRNA_LIGASE_II"/>
    <property type="match status" value="1"/>
</dbReference>
<dbReference type="PROSITE" id="PS51880">
    <property type="entry name" value="TGS"/>
    <property type="match status" value="1"/>
</dbReference>
<keyword id="KW-0030">Aminoacyl-tRNA synthetase</keyword>
<keyword id="KW-0067">ATP-binding</keyword>
<keyword id="KW-0963">Cytoplasm</keyword>
<keyword id="KW-0436">Ligase</keyword>
<keyword id="KW-0479">Metal-binding</keyword>
<keyword id="KW-0547">Nucleotide-binding</keyword>
<keyword id="KW-0648">Protein biosynthesis</keyword>
<keyword id="KW-0694">RNA-binding</keyword>
<keyword id="KW-0820">tRNA-binding</keyword>
<keyword id="KW-0862">Zinc</keyword>
<organism>
    <name type="scientific">Acinetobacter baumannii (strain AB307-0294)</name>
    <dbReference type="NCBI Taxonomy" id="557600"/>
    <lineage>
        <taxon>Bacteria</taxon>
        <taxon>Pseudomonadati</taxon>
        <taxon>Pseudomonadota</taxon>
        <taxon>Gammaproteobacteria</taxon>
        <taxon>Moraxellales</taxon>
        <taxon>Moraxellaceae</taxon>
        <taxon>Acinetobacter</taxon>
        <taxon>Acinetobacter calcoaceticus/baumannii complex</taxon>
    </lineage>
</organism>
<evidence type="ECO:0000255" key="1">
    <source>
        <dbReference type="HAMAP-Rule" id="MF_00184"/>
    </source>
</evidence>
<evidence type="ECO:0000255" key="2">
    <source>
        <dbReference type="PROSITE-ProRule" id="PRU01228"/>
    </source>
</evidence>
<gene>
    <name evidence="1" type="primary">thrS</name>
    <name type="ordered locus">ABBFA_002969</name>
</gene>
<protein>
    <recommendedName>
        <fullName evidence="1">Threonine--tRNA ligase</fullName>
        <ecNumber evidence="1">6.1.1.3</ecNumber>
    </recommendedName>
    <alternativeName>
        <fullName evidence="1">Threonyl-tRNA synthetase</fullName>
        <shortName evidence="1">ThrRS</shortName>
    </alternativeName>
</protein>
<reference key="1">
    <citation type="journal article" date="2008" name="J. Bacteriol.">
        <title>Comparative genome sequence analysis of multidrug-resistant Acinetobacter baumannii.</title>
        <authorList>
            <person name="Adams M.D."/>
            <person name="Goglin K."/>
            <person name="Molyneaux N."/>
            <person name="Hujer K.M."/>
            <person name="Lavender H."/>
            <person name="Jamison J.J."/>
            <person name="MacDonald I.J."/>
            <person name="Martin K.M."/>
            <person name="Russo T."/>
            <person name="Campagnari A.A."/>
            <person name="Hujer A.M."/>
            <person name="Bonomo R.A."/>
            <person name="Gill S.R."/>
        </authorList>
    </citation>
    <scope>NUCLEOTIDE SEQUENCE [LARGE SCALE GENOMIC DNA]</scope>
    <source>
        <strain>AB307-0294</strain>
    </source>
</reference>
<comment type="function">
    <text evidence="1">Catalyzes the attachment of threonine to tRNA(Thr) in a two-step reaction: L-threonine is first activated by ATP to form Thr-AMP and then transferred to the acceptor end of tRNA(Thr). Also edits incorrectly charged L-seryl-tRNA(Thr).</text>
</comment>
<comment type="catalytic activity">
    <reaction evidence="1">
        <text>tRNA(Thr) + L-threonine + ATP = L-threonyl-tRNA(Thr) + AMP + diphosphate + H(+)</text>
        <dbReference type="Rhea" id="RHEA:24624"/>
        <dbReference type="Rhea" id="RHEA-COMP:9670"/>
        <dbReference type="Rhea" id="RHEA-COMP:9704"/>
        <dbReference type="ChEBI" id="CHEBI:15378"/>
        <dbReference type="ChEBI" id="CHEBI:30616"/>
        <dbReference type="ChEBI" id="CHEBI:33019"/>
        <dbReference type="ChEBI" id="CHEBI:57926"/>
        <dbReference type="ChEBI" id="CHEBI:78442"/>
        <dbReference type="ChEBI" id="CHEBI:78534"/>
        <dbReference type="ChEBI" id="CHEBI:456215"/>
        <dbReference type="EC" id="6.1.1.3"/>
    </reaction>
</comment>
<comment type="cofactor">
    <cofactor evidence="1">
        <name>Zn(2+)</name>
        <dbReference type="ChEBI" id="CHEBI:29105"/>
    </cofactor>
    <text evidence="1">Binds 1 zinc ion per subunit.</text>
</comment>
<comment type="subunit">
    <text evidence="1">Homodimer.</text>
</comment>
<comment type="subcellular location">
    <subcellularLocation>
        <location evidence="1">Cytoplasm</location>
    </subcellularLocation>
</comment>
<comment type="similarity">
    <text evidence="1">Belongs to the class-II aminoacyl-tRNA synthetase family.</text>
</comment>
<accession>B7H005</accession>
<name>SYT_ACIB3</name>
<sequence length="640" mass="73151">MPIITLPNGDQKSFDHPVSVMEVAQSIGPGLAKNTVAGRVNDRLVDACDLITEDSTLQIITPKDEEGLEIIRHSCAHLVGHAVKQLFPEAKMVIGPVIEEGFYYDIWMPRPFTLDDMAAIEERMKKLIDQDYDVIKKMTPRDEVIKVFTDRGEEYKLRLVEDMPEEKAMGLYYHQEYVDMCRGPHVPNTKFLKSFKLTKISGAYWRGDAKNEQLQRIYGTAWADKKQLAAYIKRIEEAEKRDHRKIGKALDLFHMQEEAPGMVFWHANGWTIYQVLEQYMRKVQQDNGYQEIKTPQIVDFTLWEKSGHAANYAENMFTTHSESRNYAVKPMNCPCHVQVFNQGLKSYRDLPIRLAEFGSCHRNEPSGSLHGIMRVRGFTQDDAHIFCTKEQIGKEVADFIKLTLDVYKDFGFEEVQMKLSTRPEKRVGDDALWDLAEKSLADALDAAGLEWELQPGEGAFYGPKIEFSLKDCLGRVWQCGTIQCDFNLPVRLDASYVTEENERDQPVMLHRAILGSFERFIGILIEHYAGFMPPWLSPVQACVMNITDSQAEASEQVVAKLKENGLRAISDLRNEKIGFKIRERTLERIPYLLVLGDREVEEGTVNVRTRSGKNLGTMSVDAFIDLVKSAVAERGRYIVE</sequence>